<feature type="chain" id="PRO_0000375164" description="B3 domain-containing protein At5g38490">
    <location>
        <begin position="1"/>
        <end position="364"/>
    </location>
</feature>
<feature type="DNA-binding region" description="TF-B3" evidence="1">
    <location>
        <begin position="260"/>
        <end position="364"/>
    </location>
</feature>
<feature type="region of interest" description="Disordered" evidence="2">
    <location>
        <begin position="148"/>
        <end position="202"/>
    </location>
</feature>
<proteinExistence type="evidence at transcript level"/>
<name>Y5849_ARATH</name>
<dbReference type="EMBL" id="AB005231">
    <property type="protein sequence ID" value="BAB10139.1"/>
    <property type="molecule type" value="Genomic_DNA"/>
</dbReference>
<dbReference type="EMBL" id="CP002688">
    <property type="protein sequence ID" value="AED94325.1"/>
    <property type="molecule type" value="Genomic_DNA"/>
</dbReference>
<dbReference type="EMBL" id="AY954871">
    <property type="protein sequence ID" value="AAX55197.1"/>
    <property type="molecule type" value="Genomic_DNA"/>
</dbReference>
<dbReference type="EMBL" id="DQ132733">
    <property type="protein sequence ID" value="AAZ52763.1"/>
    <property type="molecule type" value="mRNA"/>
</dbReference>
<dbReference type="EMBL" id="AB493769">
    <property type="protein sequence ID" value="BAH30607.1"/>
    <property type="molecule type" value="Genomic_DNA"/>
</dbReference>
<dbReference type="RefSeq" id="NP_198665.1">
    <property type="nucleotide sequence ID" value="NM_123210.2"/>
</dbReference>
<dbReference type="BioGRID" id="19088">
    <property type="interactions" value="2"/>
</dbReference>
<dbReference type="IntAct" id="Q9FFX2">
    <property type="interactions" value="4"/>
</dbReference>
<dbReference type="PaxDb" id="3702-AT5G38490.1"/>
<dbReference type="EnsemblPlants" id="AT5G38490.1">
    <property type="protein sequence ID" value="AT5G38490.1"/>
    <property type="gene ID" value="AT5G38490"/>
</dbReference>
<dbReference type="GeneID" id="833837"/>
<dbReference type="Gramene" id="AT5G38490.1">
    <property type="protein sequence ID" value="AT5G38490.1"/>
    <property type="gene ID" value="AT5G38490"/>
</dbReference>
<dbReference type="KEGG" id="ath:AT5G38490"/>
<dbReference type="Araport" id="AT5G38490"/>
<dbReference type="TAIR" id="AT5G38490"/>
<dbReference type="HOGENOM" id="CLU_072178_0_0_1"/>
<dbReference type="InParanoid" id="Q9FFX2"/>
<dbReference type="OMA" id="VMRYMNA"/>
<dbReference type="PhylomeDB" id="Q9FFX2"/>
<dbReference type="PRO" id="PR:Q9FFX2"/>
<dbReference type="Proteomes" id="UP000006548">
    <property type="component" value="Chromosome 5"/>
</dbReference>
<dbReference type="ExpressionAtlas" id="Q9FFX2">
    <property type="expression patterns" value="baseline and differential"/>
</dbReference>
<dbReference type="GO" id="GO:0005634">
    <property type="term" value="C:nucleus"/>
    <property type="evidence" value="ECO:0007669"/>
    <property type="project" value="UniProtKB-SubCell"/>
</dbReference>
<dbReference type="GO" id="GO:0003677">
    <property type="term" value="F:DNA binding"/>
    <property type="evidence" value="ECO:0007669"/>
    <property type="project" value="UniProtKB-KW"/>
</dbReference>
<dbReference type="Gene3D" id="2.40.330.10">
    <property type="entry name" value="DNA-binding pseudobarrel domain"/>
    <property type="match status" value="1"/>
</dbReference>
<dbReference type="InterPro" id="IPR005508">
    <property type="entry name" value="At2g31720-like"/>
</dbReference>
<dbReference type="InterPro" id="IPR003340">
    <property type="entry name" value="B3_DNA-bd"/>
</dbReference>
<dbReference type="InterPro" id="IPR015300">
    <property type="entry name" value="DNA-bd_pseudobarrel_sf"/>
</dbReference>
<dbReference type="PANTHER" id="PTHR31541">
    <property type="entry name" value="B3 DOMAIN PLANT PROTEIN-RELATED"/>
    <property type="match status" value="1"/>
</dbReference>
<dbReference type="PANTHER" id="PTHR31541:SF34">
    <property type="entry name" value="TF-B3 DOMAIN-CONTAINING PROTEIN"/>
    <property type="match status" value="1"/>
</dbReference>
<dbReference type="Pfam" id="PF03754">
    <property type="entry name" value="At2g31720-like"/>
    <property type="match status" value="1"/>
</dbReference>
<dbReference type="SUPFAM" id="SSF101936">
    <property type="entry name" value="DNA-binding pseudobarrel domain"/>
    <property type="match status" value="1"/>
</dbReference>
<dbReference type="PROSITE" id="PS50863">
    <property type="entry name" value="B3"/>
    <property type="match status" value="1"/>
</dbReference>
<organism>
    <name type="scientific">Arabidopsis thaliana</name>
    <name type="common">Mouse-ear cress</name>
    <dbReference type="NCBI Taxonomy" id="3702"/>
    <lineage>
        <taxon>Eukaryota</taxon>
        <taxon>Viridiplantae</taxon>
        <taxon>Streptophyta</taxon>
        <taxon>Embryophyta</taxon>
        <taxon>Tracheophyta</taxon>
        <taxon>Spermatophyta</taxon>
        <taxon>Magnoliopsida</taxon>
        <taxon>eudicotyledons</taxon>
        <taxon>Gunneridae</taxon>
        <taxon>Pentapetalae</taxon>
        <taxon>rosids</taxon>
        <taxon>malvids</taxon>
        <taxon>Brassicales</taxon>
        <taxon>Brassicaceae</taxon>
        <taxon>Camelineae</taxon>
        <taxon>Arabidopsis</taxon>
    </lineage>
</organism>
<comment type="subcellular location">
    <subcellularLocation>
        <location evidence="1">Nucleus</location>
    </subcellularLocation>
</comment>
<reference key="1">
    <citation type="journal article" date="1997" name="DNA Res.">
        <title>Structural analysis of Arabidopsis thaliana chromosome 5. I. Sequence features of the 1.6 Mb regions covered by twenty physically assigned P1 clones.</title>
        <authorList>
            <person name="Sato S."/>
            <person name="Kotani H."/>
            <person name="Nakamura Y."/>
            <person name="Kaneko T."/>
            <person name="Asamizu E."/>
            <person name="Fukami M."/>
            <person name="Miyajima N."/>
            <person name="Tabata S."/>
        </authorList>
    </citation>
    <scope>NUCLEOTIDE SEQUENCE [LARGE SCALE GENOMIC DNA]</scope>
    <source>
        <strain>cv. Columbia</strain>
    </source>
</reference>
<reference key="2">
    <citation type="journal article" date="2017" name="Plant J.">
        <title>Araport11: a complete reannotation of the Arabidopsis thaliana reference genome.</title>
        <authorList>
            <person name="Cheng C.Y."/>
            <person name="Krishnakumar V."/>
            <person name="Chan A.P."/>
            <person name="Thibaud-Nissen F."/>
            <person name="Schobel S."/>
            <person name="Town C.D."/>
        </authorList>
    </citation>
    <scope>GENOME REANNOTATION</scope>
    <source>
        <strain>cv. Columbia</strain>
    </source>
</reference>
<reference key="3">
    <citation type="submission" date="2005-03" db="EMBL/GenBank/DDBJ databases">
        <authorList>
            <person name="Underwood B.A."/>
            <person name="Xiao Y.-L."/>
            <person name="Moskal W.A. Jr."/>
            <person name="Monaghan E.L."/>
            <person name="Wang W."/>
            <person name="Redman J.C."/>
            <person name="Wu H.C."/>
            <person name="Utterback T."/>
            <person name="Town C.D."/>
        </authorList>
    </citation>
    <scope>NUCLEOTIDE SEQUENCE [LARGE SCALE GENOMIC DNA]</scope>
    <source>
        <strain>cv. Columbia</strain>
    </source>
</reference>
<reference key="4">
    <citation type="submission" date="2005-07" db="EMBL/GenBank/DDBJ databases">
        <title>Reconstruction of cDNA sequences for hypothetical genes in Arabidopsis thaliana from 5' and 3' RACE products.</title>
        <authorList>
            <person name="Xiao Y.-L."/>
            <person name="Underwood B.A."/>
            <person name="Moskal W.A. Jr."/>
            <person name="Redman J.C."/>
            <person name="Wang W."/>
            <person name="Monaghan E.L."/>
            <person name="Wu H.C."/>
            <person name="Utterback T."/>
            <person name="Town C.D."/>
        </authorList>
    </citation>
    <scope>NUCLEOTIDE SEQUENCE [LARGE SCALE MRNA]</scope>
    <source>
        <strain>cv. Columbia</strain>
    </source>
</reference>
<reference key="5">
    <citation type="submission" date="2009-03" db="EMBL/GenBank/DDBJ databases">
        <title>ORF cloning and analysis of Arabidopsis transcription factor genes.</title>
        <authorList>
            <person name="Fujita M."/>
            <person name="Mizukado S."/>
            <person name="Seki M."/>
            <person name="Shinozaki K."/>
            <person name="Mitsuda N."/>
            <person name="Takiguchi Y."/>
            <person name="Takagi M."/>
        </authorList>
    </citation>
    <scope>NUCLEOTIDE SEQUENCE [LARGE SCALE GENOMIC DNA]</scope>
</reference>
<reference key="6">
    <citation type="journal article" date="2008" name="Trends Plant Sci.">
        <title>The plant B3 superfamily.</title>
        <authorList>
            <person name="Swaminathan K."/>
            <person name="Peterson K."/>
            <person name="Jack T."/>
        </authorList>
    </citation>
    <scope>GENE FAMILY</scope>
</reference>
<keyword id="KW-0238">DNA-binding</keyword>
<keyword id="KW-0539">Nucleus</keyword>
<keyword id="KW-1185">Reference proteome</keyword>
<keyword id="KW-0804">Transcription</keyword>
<keyword id="KW-0805">Transcription regulation</keyword>
<accession>Q9FFX2</accession>
<gene>
    <name type="ordered locus">At5g38490</name>
    <name type="ORF">MBB18.2</name>
</gene>
<evidence type="ECO:0000255" key="1">
    <source>
        <dbReference type="PROSITE-ProRule" id="PRU00326"/>
    </source>
</evidence>
<evidence type="ECO:0000256" key="2">
    <source>
        <dbReference type="SAM" id="MobiDB-lite"/>
    </source>
</evidence>
<protein>
    <recommendedName>
        <fullName>B3 domain-containing protein At5g38490</fullName>
    </recommendedName>
</protein>
<sequence length="364" mass="41728">MSSIMYHDNHLTDSGKNMSSGLSLLAYVTVMVAEEEEQRSRLLAEKREESKCKMSFFYLFPRKIKSSLAKRRYTQQNPNGASTCSSSLPDLNLIPTDFETDNLQNPCFDEPMVCDEEQRLKKGKSKIVYDEDYDDESEKKLFDNLNGASTSSSSLLNLPCLEPSTETKDVPNPNYQSSSPSSCLTGKTNRKRRAVEQRKSGKVKKVKVSPLPRLCTEMPEWIFQVMRYMNADAETPRLIFERTLFKSDVNSNLSRLLMPFQKLIRNDFLTPAECRAMQKDEDNDEEDDENIGVGTVLVNQRFQKWGLRFKIWAMEKDSGHGTLNYTLNWGWNDVVKSSSLKVGDKISLWTFRCRGVLCFALDTE</sequence>